<sequence>MTNTEKYKQLRSMIPEMRRIKHIHFVGIGGAGMGGIAEVLVNEGYHISGSDIATNSVTDRLISLGAKVIIGHHADSVEHADVVVVSTAINHENPEIIAAKERRIPIVRRAEMLAELMRYRHGVAIAGTHGKTTTTSLIASVYAQAQRDPTFVIGGLLNSAGTNARLGTSRYLIAEADESDASFLHLQPMVSVITNIEADHMDTYGGDFEKLKTTFVDFLHNLPFYGVAVMCIDDEINREIMPRVGRQIVTYGFSQDADVQALNFNQIGHQSQFVVRRKDKEDLALVLNLPGEHNVLNALAAIAVASEDDIDDESIVKALAEFEGIGRRFQHLGEFNTANGQVMLVDDYGHHPSEVLATIKAARAGWPDKRLVMAYQPHRYSRTRDLYDDFVEVLSQVDCLLLLDVYSAGEAAIPGADGRALCRSIRLRGQIDPIFVASPDQLASVLPDVLQAGDLLLTQGAGNIGALSKLLASTNLGFE</sequence>
<accession>Q12SC5</accession>
<evidence type="ECO:0000255" key="1">
    <source>
        <dbReference type="HAMAP-Rule" id="MF_00046"/>
    </source>
</evidence>
<feature type="chain" id="PRO_1000004405" description="UDP-N-acetylmuramate--L-alanine ligase">
    <location>
        <begin position="1"/>
        <end position="479"/>
    </location>
</feature>
<feature type="binding site" evidence="1">
    <location>
        <begin position="127"/>
        <end position="133"/>
    </location>
    <ligand>
        <name>ATP</name>
        <dbReference type="ChEBI" id="CHEBI:30616"/>
    </ligand>
</feature>
<name>MURC_SHEDO</name>
<protein>
    <recommendedName>
        <fullName evidence="1">UDP-N-acetylmuramate--L-alanine ligase</fullName>
        <ecNumber evidence="1">6.3.2.8</ecNumber>
    </recommendedName>
    <alternativeName>
        <fullName evidence="1">UDP-N-acetylmuramoyl-L-alanine synthetase</fullName>
    </alternativeName>
</protein>
<organism>
    <name type="scientific">Shewanella denitrificans (strain OS217 / ATCC BAA-1090 / DSM 15013)</name>
    <dbReference type="NCBI Taxonomy" id="318161"/>
    <lineage>
        <taxon>Bacteria</taxon>
        <taxon>Pseudomonadati</taxon>
        <taxon>Pseudomonadota</taxon>
        <taxon>Gammaproteobacteria</taxon>
        <taxon>Alteromonadales</taxon>
        <taxon>Shewanellaceae</taxon>
        <taxon>Shewanella</taxon>
    </lineage>
</organism>
<dbReference type="EC" id="6.3.2.8" evidence="1"/>
<dbReference type="EMBL" id="CP000302">
    <property type="protein sequence ID" value="ABE53651.1"/>
    <property type="molecule type" value="Genomic_DNA"/>
</dbReference>
<dbReference type="RefSeq" id="WP_011494818.1">
    <property type="nucleotide sequence ID" value="NC_007954.1"/>
</dbReference>
<dbReference type="SMR" id="Q12SC5"/>
<dbReference type="STRING" id="318161.Sden_0356"/>
<dbReference type="KEGG" id="sdn:Sden_0356"/>
<dbReference type="eggNOG" id="COG0773">
    <property type="taxonomic scope" value="Bacteria"/>
</dbReference>
<dbReference type="HOGENOM" id="CLU_028104_2_2_6"/>
<dbReference type="OrthoDB" id="9804126at2"/>
<dbReference type="UniPathway" id="UPA00219"/>
<dbReference type="Proteomes" id="UP000001982">
    <property type="component" value="Chromosome"/>
</dbReference>
<dbReference type="GO" id="GO:0005737">
    <property type="term" value="C:cytoplasm"/>
    <property type="evidence" value="ECO:0007669"/>
    <property type="project" value="UniProtKB-SubCell"/>
</dbReference>
<dbReference type="GO" id="GO:0005524">
    <property type="term" value="F:ATP binding"/>
    <property type="evidence" value="ECO:0007669"/>
    <property type="project" value="UniProtKB-UniRule"/>
</dbReference>
<dbReference type="GO" id="GO:0008763">
    <property type="term" value="F:UDP-N-acetylmuramate-L-alanine ligase activity"/>
    <property type="evidence" value="ECO:0007669"/>
    <property type="project" value="UniProtKB-UniRule"/>
</dbReference>
<dbReference type="GO" id="GO:0051301">
    <property type="term" value="P:cell division"/>
    <property type="evidence" value="ECO:0007669"/>
    <property type="project" value="UniProtKB-KW"/>
</dbReference>
<dbReference type="GO" id="GO:0071555">
    <property type="term" value="P:cell wall organization"/>
    <property type="evidence" value="ECO:0007669"/>
    <property type="project" value="UniProtKB-KW"/>
</dbReference>
<dbReference type="GO" id="GO:0009252">
    <property type="term" value="P:peptidoglycan biosynthetic process"/>
    <property type="evidence" value="ECO:0007669"/>
    <property type="project" value="UniProtKB-UniRule"/>
</dbReference>
<dbReference type="GO" id="GO:0008360">
    <property type="term" value="P:regulation of cell shape"/>
    <property type="evidence" value="ECO:0007669"/>
    <property type="project" value="UniProtKB-KW"/>
</dbReference>
<dbReference type="FunFam" id="3.40.1190.10:FF:000001">
    <property type="entry name" value="UDP-N-acetylmuramate--L-alanine ligase"/>
    <property type="match status" value="1"/>
</dbReference>
<dbReference type="FunFam" id="3.40.50.720:FF:000046">
    <property type="entry name" value="UDP-N-acetylmuramate--L-alanine ligase"/>
    <property type="match status" value="1"/>
</dbReference>
<dbReference type="Gene3D" id="3.90.190.20">
    <property type="entry name" value="Mur ligase, C-terminal domain"/>
    <property type="match status" value="1"/>
</dbReference>
<dbReference type="Gene3D" id="3.40.1190.10">
    <property type="entry name" value="Mur-like, catalytic domain"/>
    <property type="match status" value="1"/>
</dbReference>
<dbReference type="Gene3D" id="3.40.50.720">
    <property type="entry name" value="NAD(P)-binding Rossmann-like Domain"/>
    <property type="match status" value="1"/>
</dbReference>
<dbReference type="HAMAP" id="MF_00046">
    <property type="entry name" value="MurC"/>
    <property type="match status" value="1"/>
</dbReference>
<dbReference type="InterPro" id="IPR036565">
    <property type="entry name" value="Mur-like_cat_sf"/>
</dbReference>
<dbReference type="InterPro" id="IPR004101">
    <property type="entry name" value="Mur_ligase_C"/>
</dbReference>
<dbReference type="InterPro" id="IPR036615">
    <property type="entry name" value="Mur_ligase_C_dom_sf"/>
</dbReference>
<dbReference type="InterPro" id="IPR013221">
    <property type="entry name" value="Mur_ligase_cen"/>
</dbReference>
<dbReference type="InterPro" id="IPR000713">
    <property type="entry name" value="Mur_ligase_N"/>
</dbReference>
<dbReference type="InterPro" id="IPR050061">
    <property type="entry name" value="MurCDEF_pg_biosynth"/>
</dbReference>
<dbReference type="InterPro" id="IPR005758">
    <property type="entry name" value="UDP-N-AcMur_Ala_ligase_MurC"/>
</dbReference>
<dbReference type="NCBIfam" id="TIGR01082">
    <property type="entry name" value="murC"/>
    <property type="match status" value="1"/>
</dbReference>
<dbReference type="PANTHER" id="PTHR43445:SF3">
    <property type="entry name" value="UDP-N-ACETYLMURAMATE--L-ALANINE LIGASE"/>
    <property type="match status" value="1"/>
</dbReference>
<dbReference type="PANTHER" id="PTHR43445">
    <property type="entry name" value="UDP-N-ACETYLMURAMATE--L-ALANINE LIGASE-RELATED"/>
    <property type="match status" value="1"/>
</dbReference>
<dbReference type="Pfam" id="PF01225">
    <property type="entry name" value="Mur_ligase"/>
    <property type="match status" value="1"/>
</dbReference>
<dbReference type="Pfam" id="PF02875">
    <property type="entry name" value="Mur_ligase_C"/>
    <property type="match status" value="1"/>
</dbReference>
<dbReference type="Pfam" id="PF08245">
    <property type="entry name" value="Mur_ligase_M"/>
    <property type="match status" value="1"/>
</dbReference>
<dbReference type="SUPFAM" id="SSF51984">
    <property type="entry name" value="MurCD N-terminal domain"/>
    <property type="match status" value="1"/>
</dbReference>
<dbReference type="SUPFAM" id="SSF53623">
    <property type="entry name" value="MurD-like peptide ligases, catalytic domain"/>
    <property type="match status" value="1"/>
</dbReference>
<dbReference type="SUPFAM" id="SSF53244">
    <property type="entry name" value="MurD-like peptide ligases, peptide-binding domain"/>
    <property type="match status" value="1"/>
</dbReference>
<keyword id="KW-0067">ATP-binding</keyword>
<keyword id="KW-0131">Cell cycle</keyword>
<keyword id="KW-0132">Cell division</keyword>
<keyword id="KW-0133">Cell shape</keyword>
<keyword id="KW-0961">Cell wall biogenesis/degradation</keyword>
<keyword id="KW-0963">Cytoplasm</keyword>
<keyword id="KW-0436">Ligase</keyword>
<keyword id="KW-0547">Nucleotide-binding</keyword>
<keyword id="KW-0573">Peptidoglycan synthesis</keyword>
<keyword id="KW-1185">Reference proteome</keyword>
<proteinExistence type="inferred from homology"/>
<gene>
    <name evidence="1" type="primary">murC</name>
    <name type="ordered locus">Sden_0356</name>
</gene>
<comment type="function">
    <text evidence="1">Cell wall formation.</text>
</comment>
<comment type="catalytic activity">
    <reaction evidence="1">
        <text>UDP-N-acetyl-alpha-D-muramate + L-alanine + ATP = UDP-N-acetyl-alpha-D-muramoyl-L-alanine + ADP + phosphate + H(+)</text>
        <dbReference type="Rhea" id="RHEA:23372"/>
        <dbReference type="ChEBI" id="CHEBI:15378"/>
        <dbReference type="ChEBI" id="CHEBI:30616"/>
        <dbReference type="ChEBI" id="CHEBI:43474"/>
        <dbReference type="ChEBI" id="CHEBI:57972"/>
        <dbReference type="ChEBI" id="CHEBI:70757"/>
        <dbReference type="ChEBI" id="CHEBI:83898"/>
        <dbReference type="ChEBI" id="CHEBI:456216"/>
        <dbReference type="EC" id="6.3.2.8"/>
    </reaction>
</comment>
<comment type="pathway">
    <text evidence="1">Cell wall biogenesis; peptidoglycan biosynthesis.</text>
</comment>
<comment type="subcellular location">
    <subcellularLocation>
        <location evidence="1">Cytoplasm</location>
    </subcellularLocation>
</comment>
<comment type="similarity">
    <text evidence="1">Belongs to the MurCDEF family.</text>
</comment>
<reference key="1">
    <citation type="submission" date="2006-03" db="EMBL/GenBank/DDBJ databases">
        <title>Complete sequence of Shewanella denitrificans OS217.</title>
        <authorList>
            <consortium name="US DOE Joint Genome Institute"/>
            <person name="Copeland A."/>
            <person name="Lucas S."/>
            <person name="Lapidus A."/>
            <person name="Barry K."/>
            <person name="Detter J.C."/>
            <person name="Glavina del Rio T."/>
            <person name="Hammon N."/>
            <person name="Israni S."/>
            <person name="Dalin E."/>
            <person name="Tice H."/>
            <person name="Pitluck S."/>
            <person name="Brettin T."/>
            <person name="Bruce D."/>
            <person name="Han C."/>
            <person name="Tapia R."/>
            <person name="Gilna P."/>
            <person name="Kiss H."/>
            <person name="Schmutz J."/>
            <person name="Larimer F."/>
            <person name="Land M."/>
            <person name="Hauser L."/>
            <person name="Kyrpides N."/>
            <person name="Lykidis A."/>
            <person name="Richardson P."/>
        </authorList>
    </citation>
    <scope>NUCLEOTIDE SEQUENCE [LARGE SCALE GENOMIC DNA]</scope>
    <source>
        <strain>OS217 / ATCC BAA-1090 / DSM 15013</strain>
    </source>
</reference>